<comment type="catalytic activity">
    <reaction evidence="1">
        <text>tRNA(Leu) + L-leucine + ATP = L-leucyl-tRNA(Leu) + AMP + diphosphate</text>
        <dbReference type="Rhea" id="RHEA:11688"/>
        <dbReference type="Rhea" id="RHEA-COMP:9613"/>
        <dbReference type="Rhea" id="RHEA-COMP:9622"/>
        <dbReference type="ChEBI" id="CHEBI:30616"/>
        <dbReference type="ChEBI" id="CHEBI:33019"/>
        <dbReference type="ChEBI" id="CHEBI:57427"/>
        <dbReference type="ChEBI" id="CHEBI:78442"/>
        <dbReference type="ChEBI" id="CHEBI:78494"/>
        <dbReference type="ChEBI" id="CHEBI:456215"/>
        <dbReference type="EC" id="6.1.1.4"/>
    </reaction>
</comment>
<comment type="subcellular location">
    <subcellularLocation>
        <location evidence="1">Cytoplasm</location>
    </subcellularLocation>
</comment>
<comment type="similarity">
    <text evidence="1">Belongs to the class-I aminoacyl-tRNA synthetase family.</text>
</comment>
<sequence length="858" mass="99148">MITSENTDNRATNLYKPSDIEGKWQKIWEDDNLYNTDEQASNKEKFYALSMFPYPSGNLHMGHVRNYVITDLIARFQRFQGKVVLHPMGWDAFGLPAENAAIERGINPDKWTKQNIAHMKSQLKLLGLSVDWDREFATCDENYYVWTQFLFLELHKAGLVYQKESEVNWDPIDNTVLANEQVDSEGKSWRSGAIVEKKLLTQWFLKITDYAEELLQDLEKLNEWPERVKIMQENWIGKSIGTNINFKIKEFKKEKIQVFTTRPDTLFGVTYLAISVNHPLIKKISDNKILSKLENLKIYLQESKDKDQKKIGIPTNLIAINPINSKEIPILIASYVLDEYGTGAVMGVPAHDERDFEFAKINSIDIKQVIIKEKDKITSQLTNAFTDNGFLINSNNFDGLNNSDAKKHISEHGERNGWAENKIQFRLRDWLISRQRYWGCPIPIIKCTNCGSVPVNKKDIPVRLPNEIKISSNKINSLGSNQSWINTTCPKCGNLASRETDTMDTFMCSSWYFLRYPSSKSLTKPFEKEKINKWLPVDQYVGGVEHAILHLLYARFLTKALRDNNLFDIDEPFKRLLTQGMVQSAAYKNSITGKYISPTDIKDITNPKDPKDNSKLEVLFEKMSKSKYNGIDPESVIKKYGADTARMFILFKAPPEKDLEWGDSDVEGQYRFLCRIWKLFLDYSNNDITHEADKLKKENESSLLKSINIAIKEISNDIKNNQFNTAISELMKFYNSISSNLNYVNKDLRRESLMKFCILLAPFAPHISDEIWHLIGNSKSVHLEKWPVFDEDALKENSFELVIQINGKVRDKINVEINISDDEIKEKTLIRPNVKKWIDNKTIRKIIIVKGRIINIVV</sequence>
<reference key="1">
    <citation type="journal article" date="2003" name="Nature">
        <title>Genome divergence in two Prochlorococcus ecotypes reflects oceanic niche differentiation.</title>
        <authorList>
            <person name="Rocap G."/>
            <person name="Larimer F.W."/>
            <person name="Lamerdin J.E."/>
            <person name="Malfatti S."/>
            <person name="Chain P."/>
            <person name="Ahlgren N.A."/>
            <person name="Arellano A."/>
            <person name="Coleman M."/>
            <person name="Hauser L."/>
            <person name="Hess W.R."/>
            <person name="Johnson Z.I."/>
            <person name="Land M.L."/>
            <person name="Lindell D."/>
            <person name="Post A.F."/>
            <person name="Regala W."/>
            <person name="Shah M."/>
            <person name="Shaw S.L."/>
            <person name="Steglich C."/>
            <person name="Sullivan M.B."/>
            <person name="Ting C.S."/>
            <person name="Tolonen A."/>
            <person name="Webb E.A."/>
            <person name="Zinser E.R."/>
            <person name="Chisholm S.W."/>
        </authorList>
    </citation>
    <scope>NUCLEOTIDE SEQUENCE [LARGE SCALE GENOMIC DNA]</scope>
    <source>
        <strain>CCMP1986 / NIES-2087 / MED4</strain>
    </source>
</reference>
<keyword id="KW-0030">Aminoacyl-tRNA synthetase</keyword>
<keyword id="KW-0067">ATP-binding</keyword>
<keyword id="KW-0963">Cytoplasm</keyword>
<keyword id="KW-0436">Ligase</keyword>
<keyword id="KW-0547">Nucleotide-binding</keyword>
<keyword id="KW-0648">Protein biosynthesis</keyword>
<feature type="chain" id="PRO_0000152065" description="Leucine--tRNA ligase">
    <location>
        <begin position="1"/>
        <end position="858"/>
    </location>
</feature>
<feature type="short sequence motif" description="'HIGH' region">
    <location>
        <begin position="53"/>
        <end position="63"/>
    </location>
</feature>
<feature type="short sequence motif" description="'KMSKS' region">
    <location>
        <begin position="622"/>
        <end position="626"/>
    </location>
</feature>
<feature type="binding site" evidence="1">
    <location>
        <position position="625"/>
    </location>
    <ligand>
        <name>ATP</name>
        <dbReference type="ChEBI" id="CHEBI:30616"/>
    </ligand>
</feature>
<dbReference type="EC" id="6.1.1.4" evidence="1"/>
<dbReference type="EMBL" id="BX548174">
    <property type="protein sequence ID" value="CAE19348.1"/>
    <property type="molecule type" value="Genomic_DNA"/>
</dbReference>
<dbReference type="RefSeq" id="WP_011132522.1">
    <property type="nucleotide sequence ID" value="NC_005072.1"/>
</dbReference>
<dbReference type="SMR" id="Q7V1I2"/>
<dbReference type="STRING" id="59919.PMM0889"/>
<dbReference type="KEGG" id="pmm:PMM0889"/>
<dbReference type="eggNOG" id="COG0495">
    <property type="taxonomic scope" value="Bacteria"/>
</dbReference>
<dbReference type="HOGENOM" id="CLU_004427_0_0_3"/>
<dbReference type="OrthoDB" id="9810365at2"/>
<dbReference type="Proteomes" id="UP000001026">
    <property type="component" value="Chromosome"/>
</dbReference>
<dbReference type="GO" id="GO:0005829">
    <property type="term" value="C:cytosol"/>
    <property type="evidence" value="ECO:0007669"/>
    <property type="project" value="TreeGrafter"/>
</dbReference>
<dbReference type="GO" id="GO:0002161">
    <property type="term" value="F:aminoacyl-tRNA deacylase activity"/>
    <property type="evidence" value="ECO:0007669"/>
    <property type="project" value="InterPro"/>
</dbReference>
<dbReference type="GO" id="GO:0005524">
    <property type="term" value="F:ATP binding"/>
    <property type="evidence" value="ECO:0007669"/>
    <property type="project" value="UniProtKB-UniRule"/>
</dbReference>
<dbReference type="GO" id="GO:0004823">
    <property type="term" value="F:leucine-tRNA ligase activity"/>
    <property type="evidence" value="ECO:0007669"/>
    <property type="project" value="UniProtKB-UniRule"/>
</dbReference>
<dbReference type="GO" id="GO:0006429">
    <property type="term" value="P:leucyl-tRNA aminoacylation"/>
    <property type="evidence" value="ECO:0007669"/>
    <property type="project" value="UniProtKB-UniRule"/>
</dbReference>
<dbReference type="CDD" id="cd07958">
    <property type="entry name" value="Anticodon_Ia_Leu_BEm"/>
    <property type="match status" value="1"/>
</dbReference>
<dbReference type="CDD" id="cd00812">
    <property type="entry name" value="LeuRS_core"/>
    <property type="match status" value="1"/>
</dbReference>
<dbReference type="FunFam" id="3.40.50.620:FF:000003">
    <property type="entry name" value="Leucine--tRNA ligase"/>
    <property type="match status" value="1"/>
</dbReference>
<dbReference type="FunFam" id="3.40.50.620:FF:000056">
    <property type="entry name" value="Leucine--tRNA ligase"/>
    <property type="match status" value="1"/>
</dbReference>
<dbReference type="FunFam" id="1.10.730.10:FF:000011">
    <property type="entry name" value="Leucine--tRNA ligase chloroplastic/mitochondrial"/>
    <property type="match status" value="1"/>
</dbReference>
<dbReference type="Gene3D" id="3.40.50.620">
    <property type="entry name" value="HUPs"/>
    <property type="match status" value="2"/>
</dbReference>
<dbReference type="Gene3D" id="1.10.730.10">
    <property type="entry name" value="Isoleucyl-tRNA Synthetase, Domain 1"/>
    <property type="match status" value="1"/>
</dbReference>
<dbReference type="HAMAP" id="MF_00049_B">
    <property type="entry name" value="Leu_tRNA_synth_B"/>
    <property type="match status" value="1"/>
</dbReference>
<dbReference type="InterPro" id="IPR001412">
    <property type="entry name" value="aa-tRNA-synth_I_CS"/>
</dbReference>
<dbReference type="InterPro" id="IPR002300">
    <property type="entry name" value="aa-tRNA-synth_Ia"/>
</dbReference>
<dbReference type="InterPro" id="IPR002302">
    <property type="entry name" value="Leu-tRNA-ligase"/>
</dbReference>
<dbReference type="InterPro" id="IPR025709">
    <property type="entry name" value="Leu_tRNA-synth_edit"/>
</dbReference>
<dbReference type="InterPro" id="IPR013155">
    <property type="entry name" value="M/V/L/I-tRNA-synth_anticd-bd"/>
</dbReference>
<dbReference type="InterPro" id="IPR015413">
    <property type="entry name" value="Methionyl/Leucyl_tRNA_Synth"/>
</dbReference>
<dbReference type="InterPro" id="IPR014729">
    <property type="entry name" value="Rossmann-like_a/b/a_fold"/>
</dbReference>
<dbReference type="InterPro" id="IPR009080">
    <property type="entry name" value="tRNAsynth_Ia_anticodon-bd"/>
</dbReference>
<dbReference type="InterPro" id="IPR009008">
    <property type="entry name" value="Val/Leu/Ile-tRNA-synth_edit"/>
</dbReference>
<dbReference type="NCBIfam" id="TIGR00396">
    <property type="entry name" value="leuS_bact"/>
    <property type="match status" value="1"/>
</dbReference>
<dbReference type="PANTHER" id="PTHR43740:SF2">
    <property type="entry name" value="LEUCINE--TRNA LIGASE, MITOCHONDRIAL"/>
    <property type="match status" value="1"/>
</dbReference>
<dbReference type="PANTHER" id="PTHR43740">
    <property type="entry name" value="LEUCYL-TRNA SYNTHETASE"/>
    <property type="match status" value="1"/>
</dbReference>
<dbReference type="Pfam" id="PF08264">
    <property type="entry name" value="Anticodon_1"/>
    <property type="match status" value="1"/>
</dbReference>
<dbReference type="Pfam" id="PF00133">
    <property type="entry name" value="tRNA-synt_1"/>
    <property type="match status" value="2"/>
</dbReference>
<dbReference type="Pfam" id="PF13603">
    <property type="entry name" value="tRNA-synt_1_2"/>
    <property type="match status" value="1"/>
</dbReference>
<dbReference type="Pfam" id="PF09334">
    <property type="entry name" value="tRNA-synt_1g"/>
    <property type="match status" value="1"/>
</dbReference>
<dbReference type="PRINTS" id="PR00985">
    <property type="entry name" value="TRNASYNTHLEU"/>
</dbReference>
<dbReference type="SUPFAM" id="SSF47323">
    <property type="entry name" value="Anticodon-binding domain of a subclass of class I aminoacyl-tRNA synthetases"/>
    <property type="match status" value="1"/>
</dbReference>
<dbReference type="SUPFAM" id="SSF52374">
    <property type="entry name" value="Nucleotidylyl transferase"/>
    <property type="match status" value="1"/>
</dbReference>
<dbReference type="SUPFAM" id="SSF50677">
    <property type="entry name" value="ValRS/IleRS/LeuRS editing domain"/>
    <property type="match status" value="1"/>
</dbReference>
<dbReference type="PROSITE" id="PS00178">
    <property type="entry name" value="AA_TRNA_LIGASE_I"/>
    <property type="match status" value="1"/>
</dbReference>
<protein>
    <recommendedName>
        <fullName evidence="1">Leucine--tRNA ligase</fullName>
        <ecNumber evidence="1">6.1.1.4</ecNumber>
    </recommendedName>
    <alternativeName>
        <fullName evidence="1">Leucyl-tRNA synthetase</fullName>
        <shortName evidence="1">LeuRS</shortName>
    </alternativeName>
</protein>
<name>SYL_PROMP</name>
<accession>Q7V1I2</accession>
<gene>
    <name evidence="1" type="primary">leuS</name>
    <name type="ordered locus">PMM0889</name>
</gene>
<evidence type="ECO:0000255" key="1">
    <source>
        <dbReference type="HAMAP-Rule" id="MF_00049"/>
    </source>
</evidence>
<organism>
    <name type="scientific">Prochlorococcus marinus subsp. pastoris (strain CCMP1986 / NIES-2087 / MED4)</name>
    <dbReference type="NCBI Taxonomy" id="59919"/>
    <lineage>
        <taxon>Bacteria</taxon>
        <taxon>Bacillati</taxon>
        <taxon>Cyanobacteriota</taxon>
        <taxon>Cyanophyceae</taxon>
        <taxon>Synechococcales</taxon>
        <taxon>Prochlorococcaceae</taxon>
        <taxon>Prochlorococcus</taxon>
    </lineage>
</organism>
<proteinExistence type="inferred from homology"/>